<accession>A9CRJ7</accession>
<name>RAD25_ENTBH</name>
<protein>
    <recommendedName>
        <fullName>General transcription and DNA repair factor IIH helicase/translocase subunit XPB</fullName>
        <shortName>TFIIH subunit XPB</shortName>
        <ecNumber evidence="4">5.6.2.4</ecNumber>
    </recommendedName>
    <alternativeName>
        <fullName evidence="4">DNA 3'-5' helicase/translocase XPB</fullName>
    </alternativeName>
    <alternativeName>
        <fullName>DNA repair helicase RAD25</fullName>
    </alternativeName>
    <alternativeName>
        <fullName>RNA polymerase II transcription factor B subunit SSL2</fullName>
        <shortName>TFB subunit SSL2</shortName>
    </alternativeName>
    <alternativeName>
        <fullName>Suppressor of stem-loop mutation 2</fullName>
    </alternativeName>
</protein>
<reference key="1">
    <citation type="journal article" date="2007" name="PLoS ONE">
        <title>Patterns of genome evolution among the microsporidian parasites Encephalitozoon cuniculi, Antonospora locustae and Enterocytozoon bieneusi.</title>
        <authorList>
            <person name="Corradi N."/>
            <person name="Akiyoshi D.E."/>
            <person name="Morrison H.G."/>
            <person name="Feng X."/>
            <person name="Weiss L.M."/>
            <person name="Tzipori S."/>
            <person name="Keeling P.J."/>
        </authorList>
    </citation>
    <scope>NUCLEOTIDE SEQUENCE [LARGE SCALE GENOMIC DNA]</scope>
    <source>
        <strain>H348</strain>
    </source>
</reference>
<reference key="2">
    <citation type="journal article" date="2009" name="PLoS Pathog.">
        <title>Genomic survey of the non-cultivatable opportunistic human pathogen, Enterocytozoon bieneusi.</title>
        <authorList>
            <person name="Akiyoshi D.E."/>
            <person name="Morrison H.G."/>
            <person name="Lei S."/>
            <person name="Feng X."/>
            <person name="Zhang Q."/>
            <person name="Corradi N."/>
            <person name="Mayanja H."/>
            <person name="Tumwine J.K."/>
            <person name="Keeling P.J."/>
            <person name="Weiss L.M."/>
            <person name="Tzipori S."/>
        </authorList>
    </citation>
    <scope>NUCLEOTIDE SEQUENCE [LARGE SCALE GENOMIC DNA]</scope>
    <source>
        <strain>H348</strain>
    </source>
</reference>
<comment type="function">
    <text evidence="1">ATP-dependent 3'-5' DNA helicase/translocase; binds dsDNA rather than ssDNA, unzipping it in a translocase rather than classical helicase activity (By similarity). Component of the general transcription and DNA repair factor IIH (TFIIH) core complex. When complexed to CDK-activating kinase (CAK), involved in RNA transcription by RNA polymerase II. Also involved in transcription-coupled nucleotide excision repair (NER) of damaged DNA. In NER, TFIIH acts by opening DNA around the lesion to allow the excision of the damaged oligonucleotide and its replacement by a new DNA fragment. The ATPase activity of XPB/SSL2, but not its helicase activity, is required for DNA opening. In transcription, TFIIH has an essential role in transcription initiation. When the pre-initiation complex (PIC) has been established, TFIIH is required for promoter opening and promoter escape. The ATP-dependent helicase activity of XPB/SSL2 is required for promoter opening and promoter escape.</text>
</comment>
<comment type="catalytic activity">
    <reaction evidence="1">
        <text>Couples ATP hydrolysis with the unwinding of duplex DNA by translocating in the 3'-5' direction.</text>
        <dbReference type="EC" id="5.6.2.4"/>
    </reaction>
</comment>
<comment type="catalytic activity">
    <reaction evidence="1">
        <text>ATP + H2O = ADP + phosphate + H(+)</text>
        <dbReference type="Rhea" id="RHEA:13065"/>
        <dbReference type="ChEBI" id="CHEBI:15377"/>
        <dbReference type="ChEBI" id="CHEBI:15378"/>
        <dbReference type="ChEBI" id="CHEBI:30616"/>
        <dbReference type="ChEBI" id="CHEBI:43474"/>
        <dbReference type="ChEBI" id="CHEBI:456216"/>
        <dbReference type="EC" id="5.6.2.4"/>
    </reaction>
</comment>
<comment type="subunit">
    <text evidence="1">Component of the 7-subunit TFIIH core complex composed of XPB/SSL2, XPD/RAD3, SSL1, TFB1, TFB2, TFB4 and TFB5, which is active in NER. The core complex associates with the 3-subunit CTD-kinase module TFIIK composed of CCL1, KIN28 and TFB3 to form the 10-subunit holoenzyme (holo-TFIIH) active in transcription.</text>
</comment>
<comment type="subcellular location">
    <subcellularLocation>
        <location evidence="1">Nucleus</location>
    </subcellularLocation>
</comment>
<comment type="similarity">
    <text evidence="4">Belongs to the helicase family. RAD25/XPB subfamily.</text>
</comment>
<keyword id="KW-0067">ATP-binding</keyword>
<keyword id="KW-0227">DNA damage</keyword>
<keyword id="KW-0234">DNA repair</keyword>
<keyword id="KW-0238">DNA-binding</keyword>
<keyword id="KW-0347">Helicase</keyword>
<keyword id="KW-0378">Hydrolase</keyword>
<keyword id="KW-0413">Isomerase</keyword>
<keyword id="KW-0547">Nucleotide-binding</keyword>
<keyword id="KW-0539">Nucleus</keyword>
<keyword id="KW-0804">Transcription</keyword>
<keyword id="KW-0805">Transcription regulation</keyword>
<proteinExistence type="inferred from homology"/>
<feature type="chain" id="PRO_0000388444" description="General transcription and DNA repair factor IIH helicase/translocase subunit XPB">
    <location>
        <begin position="1"/>
        <end position="609"/>
    </location>
</feature>
<feature type="domain" description="Helicase ATP-binding" evidence="2">
    <location>
        <begin position="200"/>
        <end position="369"/>
    </location>
</feature>
<feature type="domain" description="Helicase C-terminal" evidence="3">
    <location>
        <begin position="423"/>
        <end position="584"/>
    </location>
</feature>
<feature type="short sequence motif" description="DEAH box">
    <location>
        <begin position="322"/>
        <end position="325"/>
    </location>
</feature>
<feature type="binding site" evidence="2">
    <location>
        <begin position="213"/>
        <end position="220"/>
    </location>
    <ligand>
        <name>ATP</name>
        <dbReference type="ChEBI" id="CHEBI:30616"/>
    </ligand>
</feature>
<dbReference type="EC" id="5.6.2.4" evidence="4"/>
<dbReference type="EMBL" id="ABGB01000001">
    <property type="protein sequence ID" value="EDQ31310.1"/>
    <property type="molecule type" value="Genomic_DNA"/>
</dbReference>
<dbReference type="RefSeq" id="XP_001827839.1">
    <property type="nucleotide sequence ID" value="XM_001827787.1"/>
</dbReference>
<dbReference type="SMR" id="A9CRJ7"/>
<dbReference type="FunCoup" id="A9CRJ7">
    <property type="interactions" value="227"/>
</dbReference>
<dbReference type="STRING" id="481877.A9CRJ7"/>
<dbReference type="VEuPathDB" id="MicrosporidiaDB:EBI_23223"/>
<dbReference type="HOGENOM" id="CLU_008213_0_0_1"/>
<dbReference type="InParanoid" id="A9CRJ7"/>
<dbReference type="OMA" id="RCQEIDY"/>
<dbReference type="OrthoDB" id="10262986at2759"/>
<dbReference type="GO" id="GO:0000112">
    <property type="term" value="C:nucleotide-excision repair factor 3 complex"/>
    <property type="evidence" value="ECO:0007669"/>
    <property type="project" value="TreeGrafter"/>
</dbReference>
<dbReference type="GO" id="GO:0005675">
    <property type="term" value="C:transcription factor TFIIH holo complex"/>
    <property type="evidence" value="ECO:0007669"/>
    <property type="project" value="TreeGrafter"/>
</dbReference>
<dbReference type="GO" id="GO:0097550">
    <property type="term" value="C:transcription preinitiation complex"/>
    <property type="evidence" value="ECO:0007669"/>
    <property type="project" value="TreeGrafter"/>
</dbReference>
<dbReference type="GO" id="GO:0043138">
    <property type="term" value="F:3'-5' DNA helicase activity"/>
    <property type="evidence" value="ECO:0007669"/>
    <property type="project" value="TreeGrafter"/>
</dbReference>
<dbReference type="GO" id="GO:0005524">
    <property type="term" value="F:ATP binding"/>
    <property type="evidence" value="ECO:0007669"/>
    <property type="project" value="UniProtKB-KW"/>
</dbReference>
<dbReference type="GO" id="GO:0016887">
    <property type="term" value="F:ATP hydrolysis activity"/>
    <property type="evidence" value="ECO:0007669"/>
    <property type="project" value="RHEA"/>
</dbReference>
<dbReference type="GO" id="GO:0003677">
    <property type="term" value="F:DNA binding"/>
    <property type="evidence" value="ECO:0007669"/>
    <property type="project" value="UniProtKB-KW"/>
</dbReference>
<dbReference type="GO" id="GO:0006289">
    <property type="term" value="P:nucleotide-excision repair"/>
    <property type="evidence" value="ECO:0007669"/>
    <property type="project" value="InterPro"/>
</dbReference>
<dbReference type="GO" id="GO:0006367">
    <property type="term" value="P:transcription initiation at RNA polymerase II promoter"/>
    <property type="evidence" value="ECO:0007669"/>
    <property type="project" value="InterPro"/>
</dbReference>
<dbReference type="CDD" id="cd18029">
    <property type="entry name" value="DEXHc_XPB"/>
    <property type="match status" value="1"/>
</dbReference>
<dbReference type="CDD" id="cd18789">
    <property type="entry name" value="SF2_C_XPB"/>
    <property type="match status" value="1"/>
</dbReference>
<dbReference type="FunFam" id="3.40.50.300:FF:000077">
    <property type="entry name" value="Probable DNA repair helicase RAD25"/>
    <property type="match status" value="1"/>
</dbReference>
<dbReference type="FunFam" id="3.40.50.300:FF:000117">
    <property type="entry name" value="Putative DNA repair helicase rad25"/>
    <property type="match status" value="1"/>
</dbReference>
<dbReference type="Gene3D" id="3.40.50.300">
    <property type="entry name" value="P-loop containing nucleotide triphosphate hydrolases"/>
    <property type="match status" value="2"/>
</dbReference>
<dbReference type="InterPro" id="IPR050615">
    <property type="entry name" value="ATP-dep_DNA_Helicase"/>
</dbReference>
<dbReference type="InterPro" id="IPR032438">
    <property type="entry name" value="ERCC3_RAD25_C"/>
</dbReference>
<dbReference type="InterPro" id="IPR006935">
    <property type="entry name" value="Helicase/UvrB_N"/>
</dbReference>
<dbReference type="InterPro" id="IPR014001">
    <property type="entry name" value="Helicase_ATP-bd"/>
</dbReference>
<dbReference type="InterPro" id="IPR001650">
    <property type="entry name" value="Helicase_C-like"/>
</dbReference>
<dbReference type="InterPro" id="IPR027417">
    <property type="entry name" value="P-loop_NTPase"/>
</dbReference>
<dbReference type="InterPro" id="IPR001161">
    <property type="entry name" value="XPB/Ssl2"/>
</dbReference>
<dbReference type="InterPro" id="IPR032830">
    <property type="entry name" value="XPB/Ssl2_N"/>
</dbReference>
<dbReference type="NCBIfam" id="TIGR00603">
    <property type="entry name" value="rad25"/>
    <property type="match status" value="1"/>
</dbReference>
<dbReference type="PANTHER" id="PTHR11274:SF0">
    <property type="entry name" value="GENERAL TRANSCRIPTION AND DNA REPAIR FACTOR IIH HELICASE SUBUNIT XPB"/>
    <property type="match status" value="1"/>
</dbReference>
<dbReference type="PANTHER" id="PTHR11274">
    <property type="entry name" value="RAD25/XP-B DNA REPAIR HELICASE"/>
    <property type="match status" value="1"/>
</dbReference>
<dbReference type="Pfam" id="PF16203">
    <property type="entry name" value="ERCC3_RAD25_C"/>
    <property type="match status" value="1"/>
</dbReference>
<dbReference type="Pfam" id="PF13625">
    <property type="entry name" value="Helicase_C_3"/>
    <property type="match status" value="1"/>
</dbReference>
<dbReference type="Pfam" id="PF04851">
    <property type="entry name" value="ResIII"/>
    <property type="match status" value="1"/>
</dbReference>
<dbReference type="PRINTS" id="PR00851">
    <property type="entry name" value="XRODRMPGMNTB"/>
</dbReference>
<dbReference type="SMART" id="SM00487">
    <property type="entry name" value="DEXDc"/>
    <property type="match status" value="1"/>
</dbReference>
<dbReference type="SMART" id="SM00490">
    <property type="entry name" value="HELICc"/>
    <property type="match status" value="1"/>
</dbReference>
<dbReference type="SUPFAM" id="SSF52540">
    <property type="entry name" value="P-loop containing nucleoside triphosphate hydrolases"/>
    <property type="match status" value="2"/>
</dbReference>
<dbReference type="PROSITE" id="PS51192">
    <property type="entry name" value="HELICASE_ATP_BIND_1"/>
    <property type="match status" value="1"/>
</dbReference>
<dbReference type="PROSITE" id="PS51194">
    <property type="entry name" value="HELICASE_CTER"/>
    <property type="match status" value="1"/>
</dbReference>
<sequence>MKENSEDCPLWINYDGLIILEMFRENSQQATNFLIAIAEPISRPENIHEYQITPYSLFAAASVGLTTDQITNTLQKFSKNIIPRNVKNLISDCTLSYGKLKLVRQSQKFFIEVYNDKIFNFITSDEILKSFIVNSNIDELKIEITNVEKIKKRCIEIDYPLIDEYDYTAYESVNMIKNLHIDLKPSCHIRSYQEISLNKMLGNGRARSGIIVLPCGSGKTLVGITAISTIKKSAIILCTSAVSVEQWKQSILLFTTINPYSVSRFTSDCKEWFENYNVENTSQGGILITTYSMLSFSGKRSYDVQRIINKIFAYNWGIMILDEVHVVPAQMFRKVVSSVLHQCKLGLTATLVREDDKIEDLNFLIGPKLYEANWQDLSDKGHIAKVECSEVWCEMTAEFYREYLIQDTSKKRLLSIMNPVKIQMCEYLIQKHEAQGDKIIVFSDSVFALKEYAIKMKKPFIYGPTSQTERMKILKQFQINSKINTLFLSKVGDTSIDLPEATCLIQISSHFGSRRQEAQRLGRVLRAKKRNNPNFKAYFYSLVSKDTEEMHYSAKRQQFLIDQGYSFKTIIGFNDMYYNETRLYKTKQEQKELLFNLLSKNLSSDETDK</sequence>
<organism>
    <name type="scientific">Enterocytozoon bieneusi (strain H348)</name>
    <name type="common">Microsporidian parasite</name>
    <dbReference type="NCBI Taxonomy" id="481877"/>
    <lineage>
        <taxon>Eukaryota</taxon>
        <taxon>Fungi</taxon>
        <taxon>Fungi incertae sedis</taxon>
        <taxon>Microsporidia</taxon>
        <taxon>Enterocytozoonidae</taxon>
        <taxon>Enterocytozoon</taxon>
    </lineage>
</organism>
<evidence type="ECO:0000250" key="1">
    <source>
        <dbReference type="UniProtKB" id="Q00578"/>
    </source>
</evidence>
<evidence type="ECO:0000255" key="2">
    <source>
        <dbReference type="PROSITE-ProRule" id="PRU00541"/>
    </source>
</evidence>
<evidence type="ECO:0000255" key="3">
    <source>
        <dbReference type="PROSITE-ProRule" id="PRU00542"/>
    </source>
</evidence>
<evidence type="ECO:0000305" key="4"/>
<gene>
    <name type="primary">SSL2</name>
    <name type="synonym">RAD25</name>
    <name type="ORF">EBI_23223</name>
</gene>